<dbReference type="EC" id="1.14.-.-" evidence="1"/>
<dbReference type="EMBL" id="BA000021">
    <property type="protein sequence ID" value="BAC24211.1"/>
    <property type="molecule type" value="Genomic_DNA"/>
</dbReference>
<dbReference type="SMR" id="Q8D3D6"/>
<dbReference type="STRING" id="36870.gene:10368543"/>
<dbReference type="KEGG" id="wbr:yceA"/>
<dbReference type="eggNOG" id="COG1054">
    <property type="taxonomic scope" value="Bacteria"/>
</dbReference>
<dbReference type="HOGENOM" id="CLU_038878_1_1_6"/>
<dbReference type="OrthoDB" id="9778326at2"/>
<dbReference type="Proteomes" id="UP000000562">
    <property type="component" value="Chromosome"/>
</dbReference>
<dbReference type="GO" id="GO:0016705">
    <property type="term" value="F:oxidoreductase activity, acting on paired donors, with incorporation or reduction of molecular oxygen"/>
    <property type="evidence" value="ECO:0007669"/>
    <property type="project" value="UniProtKB-UniRule"/>
</dbReference>
<dbReference type="GO" id="GO:0006400">
    <property type="term" value="P:tRNA modification"/>
    <property type="evidence" value="ECO:0007669"/>
    <property type="project" value="UniProtKB-UniRule"/>
</dbReference>
<dbReference type="Gene3D" id="3.30.70.100">
    <property type="match status" value="1"/>
</dbReference>
<dbReference type="Gene3D" id="3.40.250.10">
    <property type="entry name" value="Rhodanese-like domain"/>
    <property type="match status" value="1"/>
</dbReference>
<dbReference type="HAMAP" id="MF_00469">
    <property type="entry name" value="TrhO"/>
    <property type="match status" value="1"/>
</dbReference>
<dbReference type="InterPro" id="IPR001763">
    <property type="entry name" value="Rhodanese-like_dom"/>
</dbReference>
<dbReference type="InterPro" id="IPR036873">
    <property type="entry name" value="Rhodanese-like_dom_sf"/>
</dbReference>
<dbReference type="InterPro" id="IPR022111">
    <property type="entry name" value="Rhodanese_C"/>
</dbReference>
<dbReference type="InterPro" id="IPR020936">
    <property type="entry name" value="TrhO"/>
</dbReference>
<dbReference type="InterPro" id="IPR040503">
    <property type="entry name" value="TRHO_N"/>
</dbReference>
<dbReference type="NCBIfam" id="NF001133">
    <property type="entry name" value="PRK00142.1-1"/>
    <property type="match status" value="1"/>
</dbReference>
<dbReference type="PANTHER" id="PTHR43846:SF1">
    <property type="entry name" value="TRNA URIDINE(34) HYDROXYLASE"/>
    <property type="match status" value="1"/>
</dbReference>
<dbReference type="PANTHER" id="PTHR43846">
    <property type="entry name" value="UPF0176 PROTEIN YCEA"/>
    <property type="match status" value="1"/>
</dbReference>
<dbReference type="Pfam" id="PF00581">
    <property type="entry name" value="Rhodanese"/>
    <property type="match status" value="1"/>
</dbReference>
<dbReference type="Pfam" id="PF12368">
    <property type="entry name" value="Rhodanese_C"/>
    <property type="match status" value="1"/>
</dbReference>
<dbReference type="Pfam" id="PF17773">
    <property type="entry name" value="UPF0176_N"/>
    <property type="match status" value="1"/>
</dbReference>
<dbReference type="SMART" id="SM00450">
    <property type="entry name" value="RHOD"/>
    <property type="match status" value="1"/>
</dbReference>
<dbReference type="SUPFAM" id="SSF52821">
    <property type="entry name" value="Rhodanese/Cell cycle control phosphatase"/>
    <property type="match status" value="1"/>
</dbReference>
<dbReference type="PROSITE" id="PS50206">
    <property type="entry name" value="RHODANESE_3"/>
    <property type="match status" value="1"/>
</dbReference>
<sequence>MSCNIIKKISNKRYYSINYKKKTKTISFYKYCKIENIDCIQEKLFEICKKLEILGRIYISYEGINAHISIKKHKIEELKIFIKKTFDYLTDIRFNLYSDNKKQPFKKLKIKKKLNILNCGIKDCSFDIKNTGHKLTANDFNAILMKNDFILVDMRNSYEYEIGHFENALKISSKTFRQQLKLLINNLKFYKSKNIIMYCTGGIRCEAASAWMMHNGFKYVSFLDGGIIEYVNFIKKNNYPMKFLGKIFVFDDRLYEKVTSDVLSLCHQCKIQPCDNYINCKNKKCNSLFIQCIYCNKTLNEFCSNFCNEYYQSKN</sequence>
<comment type="function">
    <text evidence="1">Catalyzes oxygen-dependent 5-hydroxyuridine (ho5U) modification at position 34 in tRNAs.</text>
</comment>
<comment type="catalytic activity">
    <reaction evidence="1">
        <text>uridine(34) in tRNA + AH2 + O2 = 5-hydroxyuridine(34) in tRNA + A + H2O</text>
        <dbReference type="Rhea" id="RHEA:64224"/>
        <dbReference type="Rhea" id="RHEA-COMP:11727"/>
        <dbReference type="Rhea" id="RHEA-COMP:13381"/>
        <dbReference type="ChEBI" id="CHEBI:13193"/>
        <dbReference type="ChEBI" id="CHEBI:15377"/>
        <dbReference type="ChEBI" id="CHEBI:15379"/>
        <dbReference type="ChEBI" id="CHEBI:17499"/>
        <dbReference type="ChEBI" id="CHEBI:65315"/>
        <dbReference type="ChEBI" id="CHEBI:136877"/>
    </reaction>
</comment>
<comment type="similarity">
    <text evidence="1">Belongs to the TrhO family.</text>
</comment>
<organism>
    <name type="scientific">Wigglesworthia glossinidia brevipalpis</name>
    <dbReference type="NCBI Taxonomy" id="36870"/>
    <lineage>
        <taxon>Bacteria</taxon>
        <taxon>Pseudomonadati</taxon>
        <taxon>Pseudomonadota</taxon>
        <taxon>Gammaproteobacteria</taxon>
        <taxon>Enterobacterales</taxon>
        <taxon>Erwiniaceae</taxon>
        <taxon>Wigglesworthia</taxon>
    </lineage>
</organism>
<reference key="1">
    <citation type="journal article" date="2002" name="Nat. Genet.">
        <title>Genome sequence of the endocellular obligate symbiont of tsetse flies, Wigglesworthia glossinidia.</title>
        <authorList>
            <person name="Akman L."/>
            <person name="Yamashita A."/>
            <person name="Watanabe H."/>
            <person name="Oshima K."/>
            <person name="Shiba T."/>
            <person name="Hattori M."/>
            <person name="Aksoy S."/>
        </authorList>
    </citation>
    <scope>NUCLEOTIDE SEQUENCE [LARGE SCALE GENOMIC DNA]</scope>
</reference>
<gene>
    <name evidence="1" type="primary">trhO</name>
    <name type="ordered locus">WIGBR0650</name>
</gene>
<feature type="chain" id="PRO_0000161536" description="tRNA uridine(34) hydroxylase">
    <location>
        <begin position="1"/>
        <end position="315"/>
    </location>
</feature>
<feature type="domain" description="Rhodanese" evidence="1">
    <location>
        <begin position="145"/>
        <end position="235"/>
    </location>
</feature>
<feature type="active site" description="Cysteine persulfide intermediate" evidence="1">
    <location>
        <position position="199"/>
    </location>
</feature>
<accession>Q8D3D6</accession>
<name>TRHO_WIGBR</name>
<proteinExistence type="inferred from homology"/>
<protein>
    <recommendedName>
        <fullName evidence="1">tRNA uridine(34) hydroxylase</fullName>
        <ecNumber evidence="1">1.14.-.-</ecNumber>
    </recommendedName>
    <alternativeName>
        <fullName evidence="1">tRNA hydroxylation protein O</fullName>
    </alternativeName>
</protein>
<keyword id="KW-0560">Oxidoreductase</keyword>
<keyword id="KW-1185">Reference proteome</keyword>
<keyword id="KW-0819">tRNA processing</keyword>
<evidence type="ECO:0000255" key="1">
    <source>
        <dbReference type="HAMAP-Rule" id="MF_00469"/>
    </source>
</evidence>